<comment type="function">
    <text evidence="1">Essential for the replication of viral ssDNA. The closed circular ssDNA genome is first converted to a superhelical dsDNA. Rep binds a specific region at the genome origin of replication. It introduces an endonucleolytic nick within the conserved sequence 5'-TAATATTAC-3' in the intergenic region of the genome present in all geminiviruses, thereby initiating the rolling circle replication (RCR). Following cleavage, binds covalently to the 5'-phosphate of DNA as a tyrosyl ester. The cleavage gives rise to a free 3'-OH that serves as a primer for the cellular DNA polymerase. The polymerase synthesizes the (+) strand DNA by rolling circle mechanism. After one round of replication, a Rep-catalyzed nucleotidyl transfer reaction releases a circular single-stranded virus genome, thereby terminating the replication. Displays origin-specific DNA cleavage, nucleotidyl transferase, ATPase and helicase activities. Acts as an inhibitor of C-sense gene transcription (By similarity).</text>
</comment>
<comment type="cofactor">
    <cofactor evidence="1">
        <name>Mg(2+)</name>
        <dbReference type="ChEBI" id="CHEBI:18420"/>
    </cofactor>
    <cofactor evidence="1">
        <name>Mn(2+)</name>
        <dbReference type="ChEBI" id="CHEBI:29035"/>
    </cofactor>
    <text evidence="1">Divalent metal cations, possibly Mg(2+) or Mn(2+).</text>
</comment>
<comment type="subunit">
    <text>Homooligomer. Rep binds to repeated DNA motifs (iterons). Forms the O-complex, which is a Rep-DNA complex involved in the initiation of RCR. Part of the C- and V-complexes which are RepA-Rep-DNA complexes involved in the c-sense and v-sense transcription.</text>
</comment>
<comment type="subcellular location">
    <subcellularLocation>
        <location evidence="1">Host nucleus</location>
    </subcellularLocation>
</comment>
<comment type="alternative products">
    <event type="alternative splicing"/>
    <isoform>
        <id>O40986-1</id>
        <name>Rep</name>
        <sequence type="displayed"/>
    </isoform>
    <isoform>
        <id>O40987-1</id>
        <name>RepA</name>
        <sequence type="external"/>
    </isoform>
</comment>
<comment type="domain">
    <text>There are 3 rolling circle replication (RCR) motifs. RCR-2 is probably involved in metal coordination. RCR-3 is required for phosphodiester bond cleavage for initiation of RCR.</text>
</comment>
<comment type="similarity">
    <text evidence="4">Belongs to the geminiviridae Rep protein family.</text>
</comment>
<comment type="sequence caution" evidence="4">
    <conflict type="erroneous gene model prediction">
        <sequence resource="EMBL-CDS" id="AAB63456"/>
    </conflict>
</comment>
<comment type="sequence caution" evidence="4">
    <conflict type="erroneous gene model prediction">
        <sequence resource="EMBL-CDS" id="AAB63457"/>
    </conflict>
</comment>
<keyword id="KW-0025">Alternative splicing</keyword>
<keyword id="KW-0067">ATP-binding</keyword>
<keyword id="KW-0190">Covalent protein-DNA linkage</keyword>
<keyword id="KW-0235">DNA replication</keyword>
<keyword id="KW-0238">DNA-binding</keyword>
<keyword id="KW-0255">Endonuclease</keyword>
<keyword id="KW-0347">Helicase</keyword>
<keyword id="KW-1048">Host nucleus</keyword>
<keyword id="KW-0378">Hydrolase</keyword>
<keyword id="KW-0479">Metal-binding</keyword>
<keyword id="KW-0511">Multifunctional enzyme</keyword>
<keyword id="KW-0540">Nuclease</keyword>
<keyword id="KW-0547">Nucleotide-binding</keyword>
<keyword id="KW-0548">Nucleotidyltransferase</keyword>
<keyword id="KW-0678">Repressor</keyword>
<keyword id="KW-0808">Transferase</keyword>
<evidence type="ECO:0000250" key="1"/>
<evidence type="ECO:0000255" key="2"/>
<evidence type="ECO:0000255" key="3">
    <source>
        <dbReference type="PROSITE-ProRule" id="PRU01364"/>
    </source>
</evidence>
<evidence type="ECO:0000305" key="4"/>
<dbReference type="EC" id="2.7.7.-"/>
<dbReference type="EC" id="3.1.21.-"/>
<dbReference type="EMBL" id="AF007881">
    <property type="protein sequence ID" value="AAB63456.1"/>
    <property type="status" value="ALT_SEQ"/>
    <property type="molecule type" value="Genomic_DNA"/>
</dbReference>
<dbReference type="EMBL" id="AF007881">
    <property type="protein sequence ID" value="AAB63457.1"/>
    <property type="status" value="ALT_SEQ"/>
    <property type="molecule type" value="Genomic_DNA"/>
</dbReference>
<dbReference type="EMBL" id="U20870">
    <property type="protein sequence ID" value="AAA64305.1"/>
    <property type="molecule type" value="Genomic_DNA"/>
</dbReference>
<dbReference type="SMR" id="O40986"/>
<dbReference type="Proteomes" id="UP000008872">
    <property type="component" value="Genome"/>
</dbReference>
<dbReference type="GO" id="GO:0042025">
    <property type="term" value="C:host cell nucleus"/>
    <property type="evidence" value="ECO:0007669"/>
    <property type="project" value="UniProtKB-SubCell"/>
</dbReference>
<dbReference type="GO" id="GO:0005524">
    <property type="term" value="F:ATP binding"/>
    <property type="evidence" value="ECO:0007669"/>
    <property type="project" value="UniProtKB-KW"/>
</dbReference>
<dbReference type="GO" id="GO:0003677">
    <property type="term" value="F:DNA binding"/>
    <property type="evidence" value="ECO:0007669"/>
    <property type="project" value="UniProtKB-KW"/>
</dbReference>
<dbReference type="GO" id="GO:0016888">
    <property type="term" value="F:endodeoxyribonuclease activity, producing 5'-phosphomonoesters"/>
    <property type="evidence" value="ECO:0007669"/>
    <property type="project" value="InterPro"/>
</dbReference>
<dbReference type="GO" id="GO:0004386">
    <property type="term" value="F:helicase activity"/>
    <property type="evidence" value="ECO:0007669"/>
    <property type="project" value="UniProtKB-KW"/>
</dbReference>
<dbReference type="GO" id="GO:0046872">
    <property type="term" value="F:metal ion binding"/>
    <property type="evidence" value="ECO:0007669"/>
    <property type="project" value="UniProtKB-KW"/>
</dbReference>
<dbReference type="GO" id="GO:0016779">
    <property type="term" value="F:nucleotidyltransferase activity"/>
    <property type="evidence" value="ECO:0007669"/>
    <property type="project" value="UniProtKB-KW"/>
</dbReference>
<dbReference type="GO" id="GO:0005198">
    <property type="term" value="F:structural molecule activity"/>
    <property type="evidence" value="ECO:0007669"/>
    <property type="project" value="InterPro"/>
</dbReference>
<dbReference type="GO" id="GO:0006260">
    <property type="term" value="P:DNA replication"/>
    <property type="evidence" value="ECO:0007669"/>
    <property type="project" value="UniProtKB-KW"/>
</dbReference>
<dbReference type="Gene3D" id="3.40.1310.20">
    <property type="match status" value="1"/>
</dbReference>
<dbReference type="Gene3D" id="3.40.50.300">
    <property type="entry name" value="P-loop containing nucleotide triphosphate hydrolases"/>
    <property type="match status" value="1"/>
</dbReference>
<dbReference type="InterPro" id="IPR049912">
    <property type="entry name" value="CRESS_DNA_REP"/>
</dbReference>
<dbReference type="InterPro" id="IPR001146">
    <property type="entry name" value="Gemini_AL1_MSV"/>
</dbReference>
<dbReference type="InterPro" id="IPR001191">
    <property type="entry name" value="Gemini_AL1_REP"/>
</dbReference>
<dbReference type="InterPro" id="IPR022692">
    <property type="entry name" value="Gemini_AL1_REP_central"/>
</dbReference>
<dbReference type="InterPro" id="IPR027417">
    <property type="entry name" value="P-loop_NTPase"/>
</dbReference>
<dbReference type="Pfam" id="PF00799">
    <property type="entry name" value="Gemini_AL1"/>
    <property type="match status" value="1"/>
</dbReference>
<dbReference type="Pfam" id="PF08283">
    <property type="entry name" value="Gemini_AL1_M"/>
    <property type="match status" value="1"/>
</dbReference>
<dbReference type="PRINTS" id="PR00227">
    <property type="entry name" value="GEMCOATAL1"/>
</dbReference>
<dbReference type="PRINTS" id="PR00229">
    <property type="entry name" value="GEMCOATMSVL1"/>
</dbReference>
<dbReference type="SUPFAM" id="SSF55464">
    <property type="entry name" value="Origin of replication-binding domain, RBD-like"/>
    <property type="match status" value="1"/>
</dbReference>
<dbReference type="SUPFAM" id="SSF52540">
    <property type="entry name" value="P-loop containing nucleoside triphosphate hydrolases"/>
    <property type="match status" value="1"/>
</dbReference>
<dbReference type="PROSITE" id="PS52020">
    <property type="entry name" value="CRESS_DNA_REP"/>
    <property type="match status" value="1"/>
</dbReference>
<accession>O40986</accession>
<accession>Q9IBM4</accession>
<organism>
    <name type="scientific">Maize streak virus genotype C (isolate Set)</name>
    <name type="common">MSV</name>
    <dbReference type="NCBI Taxonomy" id="268344"/>
    <lineage>
        <taxon>Viruses</taxon>
        <taxon>Monodnaviria</taxon>
        <taxon>Shotokuvirae</taxon>
        <taxon>Cressdnaviricota</taxon>
        <taxon>Repensiviricetes</taxon>
        <taxon>Geplafuvirales</taxon>
        <taxon>Geminiviridae</taxon>
        <taxon>Mastrevirus</taxon>
        <taxon>Maize streak virus</taxon>
    </lineage>
</organism>
<feature type="chain" id="PRO_0000316934" description="Replication-associated protein">
    <location>
        <begin position="1"/>
        <end position="354"/>
    </location>
</feature>
<feature type="domain" description="CRESS-DNA virus Rep endonuclease" evidence="3">
    <location>
        <begin position="11"/>
        <end position="114"/>
    </location>
</feature>
<feature type="region of interest" description="Oligomerization" evidence="1">
    <location>
        <begin position="175"/>
        <end position="187"/>
    </location>
</feature>
<feature type="region of interest" description="Transactivation" evidence="1">
    <location>
        <begin position="251"/>
        <end position="269"/>
    </location>
</feature>
<feature type="short sequence motif" description="RCR-1" evidence="3">
    <location>
        <begin position="18"/>
        <end position="21"/>
    </location>
</feature>
<feature type="short sequence motif" description="RCR-2">
    <location>
        <begin position="60"/>
        <end position="65"/>
    </location>
</feature>
<feature type="short sequence motif" description="RCR-3" evidence="3">
    <location>
        <begin position="100"/>
        <end position="103"/>
    </location>
</feature>
<feature type="short sequence motif" description="Nuclear localization signal" evidence="2">
    <location>
        <begin position="291"/>
        <end position="302"/>
    </location>
</feature>
<feature type="active site" description="For DNA cleavage activity" evidence="3">
    <location>
        <position position="100"/>
    </location>
</feature>
<feature type="binding site" evidence="2">
    <location>
        <position position="52"/>
    </location>
    <ligand>
        <name>a divalent metal cation</name>
        <dbReference type="ChEBI" id="CHEBI:60240"/>
    </ligand>
</feature>
<feature type="binding site" evidence="2">
    <location>
        <position position="62"/>
    </location>
    <ligand>
        <name>a divalent metal cation</name>
        <dbReference type="ChEBI" id="CHEBI:60240"/>
    </ligand>
</feature>
<feature type="binding site" evidence="2">
    <location>
        <position position="104"/>
    </location>
    <ligand>
        <name>a divalent metal cation</name>
        <dbReference type="ChEBI" id="CHEBI:60240"/>
    </ligand>
</feature>
<feature type="binding site" evidence="2">
    <location>
        <begin position="228"/>
        <end position="235"/>
    </location>
    <ligand>
        <name>ATP</name>
        <dbReference type="ChEBI" id="CHEBI:30616"/>
    </ligand>
</feature>
<organismHost>
    <name type="scientific">Avena sativa</name>
    <name type="common">Oat</name>
    <dbReference type="NCBI Taxonomy" id="4498"/>
</organismHost>
<organismHost>
    <name type="scientific">Axonopus compressus</name>
    <dbReference type="NCBI Taxonomy" id="217170"/>
</organismHost>
<organismHost>
    <name type="scientific">Cenchrus americanus</name>
    <name type="common">Pearl millet</name>
    <name type="synonym">Pennisetum glaucum</name>
    <dbReference type="NCBI Taxonomy" id="4543"/>
</organismHost>
<organismHost>
    <name type="scientific">Cenchrus polystachios</name>
    <dbReference type="NCBI Taxonomy" id="281129"/>
</organismHost>
<organismHost>
    <name type="scientific">Coix lacryma-jobi</name>
    <name type="common">Job's tears</name>
    <dbReference type="NCBI Taxonomy" id="4505"/>
</organismHost>
<organismHost>
    <name type="scientific">Dactyloctenium aegyptium</name>
    <dbReference type="NCBI Taxonomy" id="270102"/>
</organismHost>
<organismHost>
    <name type="scientific">Digitaria</name>
    <dbReference type="NCBI Taxonomy" id="66017"/>
</organismHost>
<organismHost>
    <name type="scientific">Echinochloa colona</name>
    <dbReference type="NCBI Taxonomy" id="90396"/>
</organismHost>
<organismHost>
    <name type="scientific">Eleusine coracana</name>
    <name type="common">Indian finger millet</name>
    <name type="synonym">Ragi</name>
    <dbReference type="NCBI Taxonomy" id="4511"/>
</organismHost>
<organismHost>
    <name type="scientific">Eleusine indica</name>
    <name type="common">Goosegrass</name>
    <name type="synonym">Cynosurus indicus</name>
    <dbReference type="NCBI Taxonomy" id="29674"/>
</organismHost>
<organismHost>
    <name type="scientific">Hordeum vulgare</name>
    <name type="common">Barley</name>
    <dbReference type="NCBI Taxonomy" id="4513"/>
</organismHost>
<organismHost>
    <name type="scientific">Megathyrsus maximus</name>
    <dbReference type="NCBI Taxonomy" id="59788"/>
</organismHost>
<organismHost>
    <name type="scientific">Melinis repens</name>
    <name type="common">Red Natal grass</name>
    <name type="synonym">Rhynchelytrum repens</name>
    <dbReference type="NCBI Taxonomy" id="29709"/>
</organismHost>
<organismHost>
    <name type="scientific">Oryza glaberrima</name>
    <name type="common">African rice</name>
    <dbReference type="NCBI Taxonomy" id="4538"/>
</organismHost>
<organismHost>
    <name type="scientific">Oryza sativa</name>
    <name type="common">Rice</name>
    <dbReference type="NCBI Taxonomy" id="4530"/>
</organismHost>
<organismHost>
    <name type="scientific">Paspalum conjugatum</name>
    <name type="common">Hilo grass</name>
    <dbReference type="NCBI Taxonomy" id="158143"/>
</organismHost>
<organismHost>
    <name type="scientific">Paspalum notatum</name>
    <name type="common">Bahia grass</name>
    <dbReference type="NCBI Taxonomy" id="147272"/>
</organismHost>
<organismHost>
    <name type="scientific">Paspalum scrobiculatum</name>
    <dbReference type="NCBI Taxonomy" id="173849"/>
</organismHost>
<organismHost>
    <name type="scientific">Rottboellia cochinchinensis</name>
    <dbReference type="NCBI Taxonomy" id="300125"/>
</organismHost>
<organismHost>
    <name type="scientific">Saccharum officinarum</name>
    <name type="common">Sugarcane</name>
    <dbReference type="NCBI Taxonomy" id="4547"/>
</organismHost>
<organismHost>
    <name type="scientific">Setaria barbata</name>
    <dbReference type="NCBI Taxonomy" id="192628"/>
</organismHost>
<organismHost>
    <name type="scientific">Triticum aestivum</name>
    <name type="common">Wheat</name>
    <dbReference type="NCBI Taxonomy" id="4565"/>
</organismHost>
<organismHost>
    <name type="scientific">Urochloa deflexa</name>
    <dbReference type="NCBI Taxonomy" id="240436"/>
</organismHost>
<organismHost>
    <name type="scientific">Zea mays</name>
    <name type="common">Maize</name>
    <dbReference type="NCBI Taxonomy" id="4577"/>
</organismHost>
<proteinExistence type="inferred from homology"/>
<sequence length="354" mass="41330">MTSSSSNRPFSHRSPNTFLTYPQCPEQPEIISQRIWDLCSHWTPLYIICAREAHRDGNQCLHALIQTEKPVRTTDSRFFDIDGFHPNIQSAISPNKVRDYITKEPLALFERGTFIPRKKSFLGNSSKGNSDKKPSKDEIMRDIISHATSKQEYLSMVQKSLPYDWSTKLQYFEYSANKLFPDIQEEFINPHPTSEPDLLCNESIKDWLQPNIYQADYGTRKRSLYIVGPTRTGKSTWARSLGRHNYWQNNVDWSSYNEDTIYNIVDDIPFKYCPCWKQLVGCQKEFVVNPKYGKKKKVQMKSKPTIILANSDEDWMKEMTPGQLEYFEANCMIYVMQPGEKWYSPPELPPTEEV</sequence>
<gene>
    <name type="ORF">C1/C2</name>
</gene>
<protein>
    <recommendedName>
        <fullName>Replication-associated protein</fullName>
        <shortName>Rep</shortName>
        <ecNumber>2.7.7.-</ecNumber>
        <ecNumber>3.1.21.-</ecNumber>
    </recommendedName>
</protein>
<reference key="1">
    <citation type="journal article" date="2001" name="Arch. Virol.">
        <title>The relative infectivities and genomic characterisation of three distinct mastreviruses from South Africa.</title>
        <authorList>
            <person name="Schnippenkoetter W.H."/>
            <person name="Martin D.P."/>
            <person name="Hughes F.L."/>
            <person name="Fyvie M."/>
            <person name="Willment J.A."/>
            <person name="James D."/>
            <person name="von Wechmar M.B."/>
            <person name="Rybicki E.P."/>
        </authorList>
    </citation>
    <scope>NUCLEOTIDE SEQUENCE [GENOMIC DNA]</scope>
</reference>
<reference key="2">
    <citation type="submission" date="1995-02" db="EMBL/GenBank/DDBJ databases">
        <authorList>
            <person name="Rybicki E.P."/>
        </authorList>
    </citation>
    <scope>NUCLEOTIDE SEQUENCE [GENOMIC DNA] OF 233-315</scope>
</reference>
<name>REP_MSVSE</name>